<comment type="function">
    <text evidence="1">An essential GTPase which binds GTP, GDP and possibly (p)ppGpp with moderate affinity, with high nucleotide exchange rates and a fairly low GTP hydrolysis rate. Plays a role in control of the cell cycle, stress response, ribosome biogenesis and in those bacteria that undergo differentiation, in morphogenesis control.</text>
</comment>
<comment type="cofactor">
    <cofactor evidence="1">
        <name>Mg(2+)</name>
        <dbReference type="ChEBI" id="CHEBI:18420"/>
    </cofactor>
</comment>
<comment type="subunit">
    <text evidence="1">Monomer.</text>
</comment>
<comment type="subcellular location">
    <subcellularLocation>
        <location evidence="1">Cytoplasm</location>
    </subcellularLocation>
</comment>
<comment type="similarity">
    <text evidence="1">Belongs to the TRAFAC class OBG-HflX-like GTPase superfamily. OBG GTPase family.</text>
</comment>
<reference key="1">
    <citation type="journal article" date="2008" name="J. Bacteriol.">
        <title>Genome of the actinomycete plant pathogen Clavibacter michiganensis subsp. sepedonicus suggests recent niche adaptation.</title>
        <authorList>
            <person name="Bentley S.D."/>
            <person name="Corton C."/>
            <person name="Brown S.E."/>
            <person name="Barron A."/>
            <person name="Clark L."/>
            <person name="Doggett J."/>
            <person name="Harris B."/>
            <person name="Ormond D."/>
            <person name="Quail M.A."/>
            <person name="May G."/>
            <person name="Francis D."/>
            <person name="Knudson D."/>
            <person name="Parkhill J."/>
            <person name="Ishimaru C.A."/>
        </authorList>
    </citation>
    <scope>NUCLEOTIDE SEQUENCE [LARGE SCALE GENOMIC DNA]</scope>
    <source>
        <strain>ATCC 33113 / DSM 20744 / JCM 9667 / LMG 2889 / ICMP 2535 / C-1</strain>
    </source>
</reference>
<sequence>MATFVDTVTLHLRAGNGGNGCVSVRREKFKPLAGTDGGNGGNGGDIVLVADPQVTTLLAYHRGPHRSSRNGGPGMGDHRHGTLGETLELPVPVGTVVKDADGNELADMATPGMRFIAAEAGQGGLGNASLATTKRKAPGFALLGTQGYEGDVVLELKVVADVALVGYPSAGKSSLVAAISAAKPKIADYPFTTLHPNLGVVEVADSRYTVADVPGLIEGASEGKGLGLEFLRHVERCSALLHVLDCATLDPGRDPVSDLDIILTELAAYPVPDGQVPLLERPQLIALNKIDVPEARELAELVRPELEARGYRVFDISTVSHDGLRQLSFALAELVKDARTKAAEEPEAPRIVLRPRAVDEKPFTIRVDGGSYGDIYRVIGTKPERWVQQTDFRNDEAVGYLADRLAKLGVEDGLFKAGAVAGSSVVIGEGDGVVFDWEPTLTSTAELITSPRGADARVDPISRRTNQARREDYFARMDAKAEARAELVREGEAGLWADEDGTGQDGTDEDATTDAKA</sequence>
<proteinExistence type="inferred from homology"/>
<evidence type="ECO:0000255" key="1">
    <source>
        <dbReference type="HAMAP-Rule" id="MF_01454"/>
    </source>
</evidence>
<evidence type="ECO:0000255" key="2">
    <source>
        <dbReference type="PROSITE-ProRule" id="PRU01229"/>
    </source>
</evidence>
<evidence type="ECO:0000255" key="3">
    <source>
        <dbReference type="PROSITE-ProRule" id="PRU01231"/>
    </source>
</evidence>
<evidence type="ECO:0000256" key="4">
    <source>
        <dbReference type="SAM" id="MobiDB-lite"/>
    </source>
</evidence>
<name>OBG_CLASE</name>
<protein>
    <recommendedName>
        <fullName evidence="1">GTPase Obg</fullName>
        <ecNumber evidence="1">3.6.5.-</ecNumber>
    </recommendedName>
    <alternativeName>
        <fullName evidence="1">GTP-binding protein Obg</fullName>
    </alternativeName>
</protein>
<feature type="chain" id="PRO_0000385836" description="GTPase Obg">
    <location>
        <begin position="1"/>
        <end position="517"/>
    </location>
</feature>
<feature type="domain" description="Obg" evidence="3">
    <location>
        <begin position="2"/>
        <end position="159"/>
    </location>
</feature>
<feature type="domain" description="OBG-type G" evidence="1">
    <location>
        <begin position="160"/>
        <end position="336"/>
    </location>
</feature>
<feature type="domain" description="OCT" evidence="2">
    <location>
        <begin position="355"/>
        <end position="439"/>
    </location>
</feature>
<feature type="region of interest" description="Disordered" evidence="4">
    <location>
        <begin position="490"/>
        <end position="517"/>
    </location>
</feature>
<feature type="compositionally biased region" description="Acidic residues" evidence="4">
    <location>
        <begin position="497"/>
        <end position="517"/>
    </location>
</feature>
<feature type="binding site" evidence="1">
    <location>
        <begin position="166"/>
        <end position="173"/>
    </location>
    <ligand>
        <name>GTP</name>
        <dbReference type="ChEBI" id="CHEBI:37565"/>
    </ligand>
</feature>
<feature type="binding site" evidence="1">
    <location>
        <position position="173"/>
    </location>
    <ligand>
        <name>Mg(2+)</name>
        <dbReference type="ChEBI" id="CHEBI:18420"/>
    </ligand>
</feature>
<feature type="binding site" evidence="1">
    <location>
        <begin position="191"/>
        <end position="195"/>
    </location>
    <ligand>
        <name>GTP</name>
        <dbReference type="ChEBI" id="CHEBI:37565"/>
    </ligand>
</feature>
<feature type="binding site" evidence="1">
    <location>
        <position position="193"/>
    </location>
    <ligand>
        <name>Mg(2+)</name>
        <dbReference type="ChEBI" id="CHEBI:18420"/>
    </ligand>
</feature>
<feature type="binding site" evidence="1">
    <location>
        <begin position="212"/>
        <end position="215"/>
    </location>
    <ligand>
        <name>GTP</name>
        <dbReference type="ChEBI" id="CHEBI:37565"/>
    </ligand>
</feature>
<feature type="binding site" evidence="1">
    <location>
        <begin position="288"/>
        <end position="291"/>
    </location>
    <ligand>
        <name>GTP</name>
        <dbReference type="ChEBI" id="CHEBI:37565"/>
    </ligand>
</feature>
<feature type="binding site" evidence="1">
    <location>
        <begin position="317"/>
        <end position="319"/>
    </location>
    <ligand>
        <name>GTP</name>
        <dbReference type="ChEBI" id="CHEBI:37565"/>
    </ligand>
</feature>
<organism>
    <name type="scientific">Clavibacter sepedonicus</name>
    <name type="common">Clavibacter michiganensis subsp. sepedonicus</name>
    <dbReference type="NCBI Taxonomy" id="31964"/>
    <lineage>
        <taxon>Bacteria</taxon>
        <taxon>Bacillati</taxon>
        <taxon>Actinomycetota</taxon>
        <taxon>Actinomycetes</taxon>
        <taxon>Micrococcales</taxon>
        <taxon>Microbacteriaceae</taxon>
        <taxon>Clavibacter</taxon>
    </lineage>
</organism>
<dbReference type="EC" id="3.6.5.-" evidence="1"/>
<dbReference type="EMBL" id="AM849034">
    <property type="protein sequence ID" value="CAQ01919.1"/>
    <property type="molecule type" value="Genomic_DNA"/>
</dbReference>
<dbReference type="SMR" id="B0RDG3"/>
<dbReference type="STRING" id="31964.CMS1814"/>
<dbReference type="KEGG" id="cms:CMS1814"/>
<dbReference type="eggNOG" id="COG0536">
    <property type="taxonomic scope" value="Bacteria"/>
</dbReference>
<dbReference type="HOGENOM" id="CLU_011747_1_1_11"/>
<dbReference type="OrthoDB" id="9807318at2"/>
<dbReference type="Proteomes" id="UP000001318">
    <property type="component" value="Chromosome"/>
</dbReference>
<dbReference type="GO" id="GO:0005737">
    <property type="term" value="C:cytoplasm"/>
    <property type="evidence" value="ECO:0007669"/>
    <property type="project" value="UniProtKB-SubCell"/>
</dbReference>
<dbReference type="GO" id="GO:0005525">
    <property type="term" value="F:GTP binding"/>
    <property type="evidence" value="ECO:0007669"/>
    <property type="project" value="UniProtKB-UniRule"/>
</dbReference>
<dbReference type="GO" id="GO:0003924">
    <property type="term" value="F:GTPase activity"/>
    <property type="evidence" value="ECO:0007669"/>
    <property type="project" value="UniProtKB-UniRule"/>
</dbReference>
<dbReference type="GO" id="GO:0000287">
    <property type="term" value="F:magnesium ion binding"/>
    <property type="evidence" value="ECO:0007669"/>
    <property type="project" value="InterPro"/>
</dbReference>
<dbReference type="GO" id="GO:0042254">
    <property type="term" value="P:ribosome biogenesis"/>
    <property type="evidence" value="ECO:0007669"/>
    <property type="project" value="UniProtKB-UniRule"/>
</dbReference>
<dbReference type="CDD" id="cd01898">
    <property type="entry name" value="Obg"/>
    <property type="match status" value="1"/>
</dbReference>
<dbReference type="FunFam" id="2.70.210.12:FF:000001">
    <property type="entry name" value="GTPase Obg"/>
    <property type="match status" value="1"/>
</dbReference>
<dbReference type="Gene3D" id="3.30.300.350">
    <property type="entry name" value="GTP-binding protein OBG, C-terminal domain"/>
    <property type="match status" value="1"/>
</dbReference>
<dbReference type="Gene3D" id="2.70.210.12">
    <property type="entry name" value="GTP1/OBG domain"/>
    <property type="match status" value="1"/>
</dbReference>
<dbReference type="Gene3D" id="3.40.50.300">
    <property type="entry name" value="P-loop containing nucleotide triphosphate hydrolases"/>
    <property type="match status" value="1"/>
</dbReference>
<dbReference type="HAMAP" id="MF_01454">
    <property type="entry name" value="GTPase_Obg"/>
    <property type="match status" value="1"/>
</dbReference>
<dbReference type="InterPro" id="IPR031167">
    <property type="entry name" value="G_OBG"/>
</dbReference>
<dbReference type="InterPro" id="IPR006073">
    <property type="entry name" value="GTP-bd"/>
</dbReference>
<dbReference type="InterPro" id="IPR014100">
    <property type="entry name" value="GTP-bd_Obg/CgtA"/>
</dbReference>
<dbReference type="InterPro" id="IPR036346">
    <property type="entry name" value="GTP-bd_prot_GTP1/OBG_C_sf"/>
</dbReference>
<dbReference type="InterPro" id="IPR006074">
    <property type="entry name" value="GTP1-OBG_CS"/>
</dbReference>
<dbReference type="InterPro" id="IPR006169">
    <property type="entry name" value="GTP1_OBG_dom"/>
</dbReference>
<dbReference type="InterPro" id="IPR036726">
    <property type="entry name" value="GTP1_OBG_dom_sf"/>
</dbReference>
<dbReference type="InterPro" id="IPR045086">
    <property type="entry name" value="OBG_GTPase"/>
</dbReference>
<dbReference type="InterPro" id="IPR015349">
    <property type="entry name" value="OCT_dom"/>
</dbReference>
<dbReference type="InterPro" id="IPR027417">
    <property type="entry name" value="P-loop_NTPase"/>
</dbReference>
<dbReference type="NCBIfam" id="TIGR02729">
    <property type="entry name" value="Obg_CgtA"/>
    <property type="match status" value="1"/>
</dbReference>
<dbReference type="NCBIfam" id="TIGR03595">
    <property type="entry name" value="Obg_CgtA_exten"/>
    <property type="match status" value="1"/>
</dbReference>
<dbReference type="NCBIfam" id="NF008954">
    <property type="entry name" value="PRK12296.1"/>
    <property type="match status" value="1"/>
</dbReference>
<dbReference type="NCBIfam" id="NF008955">
    <property type="entry name" value="PRK12297.1"/>
    <property type="match status" value="1"/>
</dbReference>
<dbReference type="NCBIfam" id="NF008956">
    <property type="entry name" value="PRK12299.1"/>
    <property type="match status" value="1"/>
</dbReference>
<dbReference type="PANTHER" id="PTHR11702">
    <property type="entry name" value="DEVELOPMENTALLY REGULATED GTP-BINDING PROTEIN-RELATED"/>
    <property type="match status" value="1"/>
</dbReference>
<dbReference type="PANTHER" id="PTHR11702:SF31">
    <property type="entry name" value="MITOCHONDRIAL RIBOSOME-ASSOCIATED GTPASE 2"/>
    <property type="match status" value="1"/>
</dbReference>
<dbReference type="Pfam" id="PF09269">
    <property type="entry name" value="DUF1967"/>
    <property type="match status" value="1"/>
</dbReference>
<dbReference type="Pfam" id="PF01018">
    <property type="entry name" value="GTP1_OBG"/>
    <property type="match status" value="1"/>
</dbReference>
<dbReference type="Pfam" id="PF01926">
    <property type="entry name" value="MMR_HSR1"/>
    <property type="match status" value="1"/>
</dbReference>
<dbReference type="PRINTS" id="PR00326">
    <property type="entry name" value="GTP1OBG"/>
</dbReference>
<dbReference type="SUPFAM" id="SSF102741">
    <property type="entry name" value="Obg GTP-binding protein C-terminal domain"/>
    <property type="match status" value="1"/>
</dbReference>
<dbReference type="SUPFAM" id="SSF82051">
    <property type="entry name" value="Obg GTP-binding protein N-terminal domain"/>
    <property type="match status" value="1"/>
</dbReference>
<dbReference type="SUPFAM" id="SSF52540">
    <property type="entry name" value="P-loop containing nucleoside triphosphate hydrolases"/>
    <property type="match status" value="1"/>
</dbReference>
<dbReference type="PROSITE" id="PS51710">
    <property type="entry name" value="G_OBG"/>
    <property type="match status" value="1"/>
</dbReference>
<dbReference type="PROSITE" id="PS00905">
    <property type="entry name" value="GTP1_OBG"/>
    <property type="match status" value="1"/>
</dbReference>
<dbReference type="PROSITE" id="PS51883">
    <property type="entry name" value="OBG"/>
    <property type="match status" value="1"/>
</dbReference>
<dbReference type="PROSITE" id="PS51881">
    <property type="entry name" value="OCT"/>
    <property type="match status" value="1"/>
</dbReference>
<accession>B0RDG3</accession>
<gene>
    <name evidence="1" type="primary">obg</name>
    <name type="ordered locus">CMS1814</name>
</gene>
<keyword id="KW-0963">Cytoplasm</keyword>
<keyword id="KW-0342">GTP-binding</keyword>
<keyword id="KW-0378">Hydrolase</keyword>
<keyword id="KW-0460">Magnesium</keyword>
<keyword id="KW-0479">Metal-binding</keyword>
<keyword id="KW-0547">Nucleotide-binding</keyword>